<protein>
    <recommendedName>
        <fullName>Arf-GAP with SH3 domain, ANK repeat and PH domain-containing protein 1</fullName>
    </recommendedName>
    <alternativeName>
        <fullName>130 kDa phosphatidylinositol 4,5-bisphosphate-dependent ARF1 GTPase-activating protein</fullName>
    </alternativeName>
    <alternativeName>
        <fullName>ADP-ribosylation factor-directed GTPase-activating protein 1</fullName>
        <shortName>ARF GTPase-activating protein 1</shortName>
    </alternativeName>
    <alternativeName>
        <fullName>Development and differentiation-enhancing factor 1</fullName>
        <shortName>DEF-1</shortName>
        <shortName>Differentiation-enhancing factor 1</shortName>
    </alternativeName>
    <alternativeName>
        <fullName>PIP2-dependent ARF1 GAP</fullName>
    </alternativeName>
</protein>
<reference key="1">
    <citation type="submission" date="2005-10" db="EMBL/GenBank/DDBJ databases">
        <title>Enhanced ASAP1 expression is associated with tumor development and progression, and promotes metastasis in experimental tumors.</title>
        <authorList>
            <person name="Mueller T."/>
            <person name="Rothley M."/>
            <person name="Bauer M."/>
            <person name="Pankraz M."/>
            <person name="Sleeman J."/>
        </authorList>
    </citation>
    <scope>NUCLEOTIDE SEQUENCE [MRNA] (ISOFORMS 1; 2 AND 3)</scope>
    <source>
        <strain>Sprague-Dawley</strain>
    </source>
</reference>
<reference key="2">
    <citation type="journal article" date="2012" name="Nat. Commun.">
        <title>Quantitative maps of protein phosphorylation sites across 14 different rat organs and tissues.</title>
        <authorList>
            <person name="Lundby A."/>
            <person name="Secher A."/>
            <person name="Lage K."/>
            <person name="Nordsborg N.B."/>
            <person name="Dmytriyev A."/>
            <person name="Lundby C."/>
            <person name="Olsen J.V."/>
        </authorList>
    </citation>
    <scope>PHOSPHORYLATION [LARGE SCALE ANALYSIS] AT SER-729; SER-738; SER-851; SER-1042; SER-1056 AND SER-1143</scope>
    <scope>IDENTIFICATION BY MASS SPECTROMETRY [LARGE SCALE ANALYSIS]</scope>
</reference>
<gene>
    <name type="primary">Asap1</name>
    <name type="synonym">Ddef1</name>
</gene>
<evidence type="ECO:0000250" key="1"/>
<evidence type="ECO:0000250" key="2">
    <source>
        <dbReference type="UniProtKB" id="Q9QWY8"/>
    </source>
</evidence>
<evidence type="ECO:0000250" key="3">
    <source>
        <dbReference type="UniProtKB" id="Q9ULH1"/>
    </source>
</evidence>
<evidence type="ECO:0000255" key="4">
    <source>
        <dbReference type="PROSITE-ProRule" id="PRU00145"/>
    </source>
</evidence>
<evidence type="ECO:0000255" key="5">
    <source>
        <dbReference type="PROSITE-ProRule" id="PRU00192"/>
    </source>
</evidence>
<evidence type="ECO:0000255" key="6">
    <source>
        <dbReference type="PROSITE-ProRule" id="PRU00288"/>
    </source>
</evidence>
<evidence type="ECO:0000256" key="7">
    <source>
        <dbReference type="SAM" id="MobiDB-lite"/>
    </source>
</evidence>
<evidence type="ECO:0000303" key="8">
    <source ref="1"/>
</evidence>
<evidence type="ECO:0000305" key="9"/>
<evidence type="ECO:0007744" key="10">
    <source>
    </source>
</evidence>
<dbReference type="EMBL" id="DQ238622">
    <property type="protein sequence ID" value="ABB71896.1"/>
    <property type="molecule type" value="mRNA"/>
</dbReference>
<dbReference type="EMBL" id="DQ238623">
    <property type="protein sequence ID" value="ABB71897.1"/>
    <property type="molecule type" value="mRNA"/>
</dbReference>
<dbReference type="EMBL" id="DQ238624">
    <property type="protein sequence ID" value="ABB71898.1"/>
    <property type="molecule type" value="mRNA"/>
</dbReference>
<dbReference type="RefSeq" id="NP_001037710.1">
    <property type="nucleotide sequence ID" value="NM_001044245.1"/>
</dbReference>
<dbReference type="BMRB" id="Q1AAU6"/>
<dbReference type="SMR" id="Q1AAU6"/>
<dbReference type="FunCoup" id="Q1AAU6">
    <property type="interactions" value="3002"/>
</dbReference>
<dbReference type="IntAct" id="Q1AAU6">
    <property type="interactions" value="1"/>
</dbReference>
<dbReference type="STRING" id="10116.ENSRNOP00000070164"/>
<dbReference type="GlyGen" id="Q1AAU6">
    <property type="glycosylation" value="2 sites"/>
</dbReference>
<dbReference type="iPTMnet" id="Q1AAU6"/>
<dbReference type="PhosphoSitePlus" id="Q1AAU6"/>
<dbReference type="PaxDb" id="10116-ENSRNOP00000059763"/>
<dbReference type="GeneID" id="314961"/>
<dbReference type="KEGG" id="rno:314961"/>
<dbReference type="UCSC" id="RGD:1307379">
    <molecule id="Q1AAU6-1"/>
    <property type="organism name" value="rat"/>
</dbReference>
<dbReference type="AGR" id="RGD:1307379"/>
<dbReference type="CTD" id="50807"/>
<dbReference type="RGD" id="1307379">
    <property type="gene designation" value="Asap1"/>
</dbReference>
<dbReference type="eggNOG" id="KOG0521">
    <property type="taxonomic scope" value="Eukaryota"/>
</dbReference>
<dbReference type="InParanoid" id="Q1AAU6"/>
<dbReference type="PhylomeDB" id="Q1AAU6"/>
<dbReference type="Reactome" id="R-RNO-5620916">
    <property type="pathway name" value="VxPx cargo-targeting to cilium"/>
</dbReference>
<dbReference type="PRO" id="PR:Q1AAU6"/>
<dbReference type="Proteomes" id="UP000002494">
    <property type="component" value="Unplaced"/>
</dbReference>
<dbReference type="GO" id="GO:0043197">
    <property type="term" value="C:dendritic spine"/>
    <property type="evidence" value="ECO:0000266"/>
    <property type="project" value="RGD"/>
</dbReference>
<dbReference type="GO" id="GO:0098978">
    <property type="term" value="C:glutamatergic synapse"/>
    <property type="evidence" value="ECO:0000266"/>
    <property type="project" value="RGD"/>
</dbReference>
<dbReference type="GO" id="GO:0000139">
    <property type="term" value="C:Golgi membrane"/>
    <property type="evidence" value="ECO:0000250"/>
    <property type="project" value="UniProtKB"/>
</dbReference>
<dbReference type="GO" id="GO:0002102">
    <property type="term" value="C:podosome"/>
    <property type="evidence" value="ECO:0000266"/>
    <property type="project" value="RGD"/>
</dbReference>
<dbReference type="GO" id="GO:0032588">
    <property type="term" value="C:trans-Golgi network membrane"/>
    <property type="evidence" value="ECO:0000250"/>
    <property type="project" value="UniProtKB"/>
</dbReference>
<dbReference type="GO" id="GO:0005096">
    <property type="term" value="F:GTPase activator activity"/>
    <property type="evidence" value="ECO:0000266"/>
    <property type="project" value="RGD"/>
</dbReference>
<dbReference type="GO" id="GO:0005547">
    <property type="term" value="F:phosphatidylinositol-3,4,5-trisphosphate binding"/>
    <property type="evidence" value="ECO:0000266"/>
    <property type="project" value="RGD"/>
</dbReference>
<dbReference type="GO" id="GO:0005546">
    <property type="term" value="F:phosphatidylinositol-4,5-bisphosphate binding"/>
    <property type="evidence" value="ECO:0000266"/>
    <property type="project" value="RGD"/>
</dbReference>
<dbReference type="GO" id="GO:0001786">
    <property type="term" value="F:phosphatidylserine binding"/>
    <property type="evidence" value="ECO:0000266"/>
    <property type="project" value="RGD"/>
</dbReference>
<dbReference type="GO" id="GO:0008270">
    <property type="term" value="F:zinc ion binding"/>
    <property type="evidence" value="ECO:0007669"/>
    <property type="project" value="UniProtKB-KW"/>
</dbReference>
<dbReference type="GO" id="GO:0060271">
    <property type="term" value="P:cilium assembly"/>
    <property type="evidence" value="ECO:0000250"/>
    <property type="project" value="UniProtKB"/>
</dbReference>
<dbReference type="GO" id="GO:0061000">
    <property type="term" value="P:negative regulation of dendritic spine development"/>
    <property type="evidence" value="ECO:0000266"/>
    <property type="project" value="RGD"/>
</dbReference>
<dbReference type="GO" id="GO:1903527">
    <property type="term" value="P:positive regulation of membrane tubulation"/>
    <property type="evidence" value="ECO:0000266"/>
    <property type="project" value="RGD"/>
</dbReference>
<dbReference type="GO" id="GO:0061512">
    <property type="term" value="P:protein localization to cilium"/>
    <property type="evidence" value="ECO:0000250"/>
    <property type="project" value="UniProtKB"/>
</dbReference>
<dbReference type="GO" id="GO:0099175">
    <property type="term" value="P:regulation of postsynapse organization"/>
    <property type="evidence" value="ECO:0000266"/>
    <property type="project" value="RGD"/>
</dbReference>
<dbReference type="CDD" id="cd08848">
    <property type="entry name" value="ArfGap_ASAP1"/>
    <property type="match status" value="1"/>
</dbReference>
<dbReference type="CDD" id="cd07641">
    <property type="entry name" value="BAR_ASAP1"/>
    <property type="match status" value="1"/>
</dbReference>
<dbReference type="CDD" id="cd13251">
    <property type="entry name" value="PH_ASAP"/>
    <property type="match status" value="1"/>
</dbReference>
<dbReference type="CDD" id="cd11965">
    <property type="entry name" value="SH3_ASAP1"/>
    <property type="match status" value="1"/>
</dbReference>
<dbReference type="FunFam" id="1.20.1270.60:FF:000004">
    <property type="entry name" value="Arf-GAP with SH3 domain, ANK repeat and PH domain-containing protein 1"/>
    <property type="match status" value="1"/>
</dbReference>
<dbReference type="FunFam" id="1.25.40.950:FF:000001">
    <property type="entry name" value="Arf-GAP with SH3 domain, ANK repeat and PH domain-containing protein 1"/>
    <property type="match status" value="1"/>
</dbReference>
<dbReference type="FunFam" id="1.10.220.150:FF:000002">
    <property type="entry name" value="arf-GAP with SH3 domain, ANK repeat and PH domain-containing protein 1"/>
    <property type="match status" value="1"/>
</dbReference>
<dbReference type="FunFam" id="1.25.40.20:FF:000006">
    <property type="entry name" value="Arf-GAP with SH3 domain, ANK repeat and PH domain-containing protein 2"/>
    <property type="match status" value="1"/>
</dbReference>
<dbReference type="FunFam" id="2.30.29.30:FF:000012">
    <property type="entry name" value="Arf-GAP with SH3 domain, ANK repeat and PH domain-containing protein 2"/>
    <property type="match status" value="1"/>
</dbReference>
<dbReference type="FunFam" id="2.30.30.40:FF:000012">
    <property type="entry name" value="Arf-GAP with SH3 domain, ANK repeat and PH domain-containing protein 2"/>
    <property type="match status" value="1"/>
</dbReference>
<dbReference type="Gene3D" id="1.25.40.950">
    <property type="match status" value="1"/>
</dbReference>
<dbReference type="Gene3D" id="1.25.40.20">
    <property type="entry name" value="Ankyrin repeat-containing domain"/>
    <property type="match status" value="1"/>
</dbReference>
<dbReference type="Gene3D" id="1.10.220.150">
    <property type="entry name" value="Arf GTPase activating protein"/>
    <property type="match status" value="1"/>
</dbReference>
<dbReference type="Gene3D" id="1.20.1270.60">
    <property type="entry name" value="Arfaptin homology (AH) domain/BAR domain"/>
    <property type="match status" value="1"/>
</dbReference>
<dbReference type="Gene3D" id="2.30.29.30">
    <property type="entry name" value="Pleckstrin-homology domain (PH domain)/Phosphotyrosine-binding domain (PTB)"/>
    <property type="match status" value="1"/>
</dbReference>
<dbReference type="Gene3D" id="2.30.30.40">
    <property type="entry name" value="SH3 Domains"/>
    <property type="match status" value="1"/>
</dbReference>
<dbReference type="InterPro" id="IPR027267">
    <property type="entry name" value="AH/BAR_dom_sf"/>
</dbReference>
<dbReference type="InterPro" id="IPR002110">
    <property type="entry name" value="Ankyrin_rpt"/>
</dbReference>
<dbReference type="InterPro" id="IPR036770">
    <property type="entry name" value="Ankyrin_rpt-contain_sf"/>
</dbReference>
<dbReference type="InterPro" id="IPR037278">
    <property type="entry name" value="ARFGAP/RecO"/>
</dbReference>
<dbReference type="InterPro" id="IPR001164">
    <property type="entry name" value="ArfGAP_dom"/>
</dbReference>
<dbReference type="InterPro" id="IPR038508">
    <property type="entry name" value="ArfGAP_dom_sf"/>
</dbReference>
<dbReference type="InterPro" id="IPR043593">
    <property type="entry name" value="ASAP"/>
</dbReference>
<dbReference type="InterPro" id="IPR037928">
    <property type="entry name" value="ASAP1_BAR"/>
</dbReference>
<dbReference type="InterPro" id="IPR038016">
    <property type="entry name" value="ASAP1_SH3"/>
</dbReference>
<dbReference type="InterPro" id="IPR004148">
    <property type="entry name" value="BAR_dom"/>
</dbReference>
<dbReference type="InterPro" id="IPR011993">
    <property type="entry name" value="PH-like_dom_sf"/>
</dbReference>
<dbReference type="InterPro" id="IPR037844">
    <property type="entry name" value="PH_ASAP"/>
</dbReference>
<dbReference type="InterPro" id="IPR001849">
    <property type="entry name" value="PH_domain"/>
</dbReference>
<dbReference type="InterPro" id="IPR036028">
    <property type="entry name" value="SH3-like_dom_sf"/>
</dbReference>
<dbReference type="InterPro" id="IPR001452">
    <property type="entry name" value="SH3_domain"/>
</dbReference>
<dbReference type="PANTHER" id="PTHR45854:SF2">
    <property type="entry name" value="ARF-GAP WITH SH3 DOMAIN, ANK REPEAT AND PH DOMAIN-CONTAINING PROTEIN 1"/>
    <property type="match status" value="1"/>
</dbReference>
<dbReference type="PANTHER" id="PTHR45854">
    <property type="entry name" value="ASAP FAMILY MEMBER"/>
    <property type="match status" value="1"/>
</dbReference>
<dbReference type="Pfam" id="PF12796">
    <property type="entry name" value="Ank_2"/>
    <property type="match status" value="1"/>
</dbReference>
<dbReference type="Pfam" id="PF01412">
    <property type="entry name" value="ArfGap"/>
    <property type="match status" value="1"/>
</dbReference>
<dbReference type="Pfam" id="PF16746">
    <property type="entry name" value="BAR_3"/>
    <property type="match status" value="1"/>
</dbReference>
<dbReference type="Pfam" id="PF00169">
    <property type="entry name" value="PH"/>
    <property type="match status" value="1"/>
</dbReference>
<dbReference type="Pfam" id="PF14604">
    <property type="entry name" value="SH3_9"/>
    <property type="match status" value="1"/>
</dbReference>
<dbReference type="PRINTS" id="PR00405">
    <property type="entry name" value="REVINTRACTNG"/>
</dbReference>
<dbReference type="SMART" id="SM00248">
    <property type="entry name" value="ANK"/>
    <property type="match status" value="2"/>
</dbReference>
<dbReference type="SMART" id="SM00105">
    <property type="entry name" value="ArfGap"/>
    <property type="match status" value="1"/>
</dbReference>
<dbReference type="SMART" id="SM00233">
    <property type="entry name" value="PH"/>
    <property type="match status" value="1"/>
</dbReference>
<dbReference type="SMART" id="SM00326">
    <property type="entry name" value="SH3"/>
    <property type="match status" value="1"/>
</dbReference>
<dbReference type="SUPFAM" id="SSF48403">
    <property type="entry name" value="Ankyrin repeat"/>
    <property type="match status" value="1"/>
</dbReference>
<dbReference type="SUPFAM" id="SSF57863">
    <property type="entry name" value="ArfGap/RecO-like zinc finger"/>
    <property type="match status" value="1"/>
</dbReference>
<dbReference type="SUPFAM" id="SSF103657">
    <property type="entry name" value="BAR/IMD domain-like"/>
    <property type="match status" value="1"/>
</dbReference>
<dbReference type="SUPFAM" id="SSF50729">
    <property type="entry name" value="PH domain-like"/>
    <property type="match status" value="1"/>
</dbReference>
<dbReference type="SUPFAM" id="SSF50044">
    <property type="entry name" value="SH3-domain"/>
    <property type="match status" value="1"/>
</dbReference>
<dbReference type="PROSITE" id="PS50297">
    <property type="entry name" value="ANK_REP_REGION"/>
    <property type="match status" value="1"/>
</dbReference>
<dbReference type="PROSITE" id="PS50088">
    <property type="entry name" value="ANK_REPEAT"/>
    <property type="match status" value="2"/>
</dbReference>
<dbReference type="PROSITE" id="PS50115">
    <property type="entry name" value="ARFGAP"/>
    <property type="match status" value="1"/>
</dbReference>
<dbReference type="PROSITE" id="PS50003">
    <property type="entry name" value="PH_DOMAIN"/>
    <property type="match status" value="1"/>
</dbReference>
<dbReference type="PROSITE" id="PS50002">
    <property type="entry name" value="SH3"/>
    <property type="match status" value="1"/>
</dbReference>
<name>ASAP1_RAT</name>
<proteinExistence type="evidence at protein level"/>
<keyword id="KW-0025">Alternative splicing</keyword>
<keyword id="KW-0040">ANK repeat</keyword>
<keyword id="KW-0970">Cilium biogenesis/degradation</keyword>
<keyword id="KW-0963">Cytoplasm</keyword>
<keyword id="KW-0333">Golgi apparatus</keyword>
<keyword id="KW-0343">GTPase activation</keyword>
<keyword id="KW-0472">Membrane</keyword>
<keyword id="KW-0479">Metal-binding</keyword>
<keyword id="KW-0597">Phosphoprotein</keyword>
<keyword id="KW-1185">Reference proteome</keyword>
<keyword id="KW-0677">Repeat</keyword>
<keyword id="KW-0728">SH3 domain</keyword>
<keyword id="KW-0862">Zinc</keyword>
<keyword id="KW-0863">Zinc-finger</keyword>
<feature type="chain" id="PRO_0000263054" description="Arf-GAP with SH3 domain, ANK repeat and PH domain-containing protein 1">
    <location>
        <begin position="1"/>
        <end position="1144"/>
    </location>
</feature>
<feature type="domain" description="PH" evidence="4">
    <location>
        <begin position="336"/>
        <end position="428"/>
    </location>
</feature>
<feature type="domain" description="Arf-GAP" evidence="6">
    <location>
        <begin position="451"/>
        <end position="574"/>
    </location>
</feature>
<feature type="repeat" description="ANK 1">
    <location>
        <begin position="612"/>
        <end position="644"/>
    </location>
</feature>
<feature type="repeat" description="ANK 2">
    <location>
        <begin position="648"/>
        <end position="677"/>
    </location>
</feature>
<feature type="domain" description="SH3" evidence="5">
    <location>
        <begin position="1082"/>
        <end position="1144"/>
    </location>
</feature>
<feature type="zinc finger region" description="C4-type" evidence="6">
    <location>
        <begin position="466"/>
        <end position="489"/>
    </location>
</feature>
<feature type="region of interest" description="Disordered" evidence="7">
    <location>
        <begin position="308"/>
        <end position="330"/>
    </location>
</feature>
<feature type="region of interest" description="Disordered" evidence="7">
    <location>
        <begin position="722"/>
        <end position="771"/>
    </location>
</feature>
<feature type="region of interest" description="Disordered" evidence="7">
    <location>
        <begin position="790"/>
        <end position="1077"/>
    </location>
</feature>
<feature type="compositionally biased region" description="Polar residues" evidence="7">
    <location>
        <begin position="312"/>
        <end position="330"/>
    </location>
</feature>
<feature type="compositionally biased region" description="Acidic residues" evidence="7">
    <location>
        <begin position="725"/>
        <end position="734"/>
    </location>
</feature>
<feature type="compositionally biased region" description="Basic and acidic residues" evidence="7">
    <location>
        <begin position="735"/>
        <end position="746"/>
    </location>
</feature>
<feature type="compositionally biased region" description="Polar residues" evidence="7">
    <location>
        <begin position="747"/>
        <end position="759"/>
    </location>
</feature>
<feature type="compositionally biased region" description="Low complexity" evidence="7">
    <location>
        <begin position="790"/>
        <end position="800"/>
    </location>
</feature>
<feature type="compositionally biased region" description="Low complexity" evidence="7">
    <location>
        <begin position="821"/>
        <end position="834"/>
    </location>
</feature>
<feature type="compositionally biased region" description="Low complexity" evidence="7">
    <location>
        <begin position="889"/>
        <end position="900"/>
    </location>
</feature>
<feature type="compositionally biased region" description="Basic and acidic residues" evidence="7">
    <location>
        <begin position="916"/>
        <end position="926"/>
    </location>
</feature>
<feature type="compositionally biased region" description="Pro residues" evidence="7">
    <location>
        <begin position="947"/>
        <end position="958"/>
    </location>
</feature>
<feature type="compositionally biased region" description="Pro residues" evidence="7">
    <location>
        <begin position="971"/>
        <end position="981"/>
    </location>
</feature>
<feature type="compositionally biased region" description="Polar residues" evidence="7">
    <location>
        <begin position="1030"/>
        <end position="1049"/>
    </location>
</feature>
<feature type="modified residue" description="Phosphotyrosine; by FAK2" evidence="2">
    <location>
        <position position="308"/>
    </location>
</feature>
<feature type="modified residue" description="Phosphoserine" evidence="10">
    <location>
        <position position="729"/>
    </location>
</feature>
<feature type="modified residue" description="Phosphoserine" evidence="10">
    <location>
        <position position="738"/>
    </location>
</feature>
<feature type="modified residue" description="Phosphoserine" evidence="10">
    <location>
        <position position="851"/>
    </location>
</feature>
<feature type="modified residue" description="Phosphoserine" evidence="3">
    <location>
        <position position="855"/>
    </location>
</feature>
<feature type="modified residue" description="Phosphoserine" evidence="3">
    <location>
        <position position="1023"/>
    </location>
</feature>
<feature type="modified residue" description="Phosphoserine" evidence="10">
    <location>
        <position position="1042"/>
    </location>
</feature>
<feature type="modified residue" description="Phosphoserine" evidence="10">
    <location>
        <position position="1056"/>
    </location>
</feature>
<feature type="modified residue" description="Phosphothreonine" evidence="2">
    <location>
        <position position="1063"/>
    </location>
</feature>
<feature type="modified residue" description="Phosphoserine" evidence="10">
    <location>
        <position position="1143"/>
    </location>
</feature>
<feature type="splice variant" id="VSP_021850" description="In isoform 3." evidence="8">
    <location>
        <begin position="304"/>
        <end position="315"/>
    </location>
</feature>
<feature type="splice variant" id="VSP_021851" description="In isoform 2 and isoform 3." evidence="8">
    <location>
        <begin position="813"/>
        <end position="869"/>
    </location>
</feature>
<feature type="sequence conflict" description="In Ref. 1; ABB71897/ABB71898." evidence="9" ref="1">
    <original>M</original>
    <variation>T</variation>
    <location>
        <position position="175"/>
    </location>
</feature>
<feature type="sequence conflict" description="In Ref. 1; ABB71896." evidence="9" ref="1">
    <original>A</original>
    <variation>T</variation>
    <location>
        <position position="418"/>
    </location>
</feature>
<feature type="sequence conflict" description="In Ref. 1; ABB71897/ABB71898." evidence="9" ref="1">
    <original>K</original>
    <variation>Q</variation>
    <location>
        <position position="520"/>
    </location>
</feature>
<feature type="sequence conflict" description="In Ref. 1; ABB71897/ABB71898." evidence="9" ref="1">
    <original>D</original>
    <variation>N</variation>
    <location>
        <position position="1092"/>
    </location>
</feature>
<sequence length="1144" mass="127088">MRSSASRLSSFSSRDSLWNRMPDQISVSEFIAETTEDYNSPTTSSFTTRLHNCRNTVTLLEEALDQDRTALQKVKKSVKAIYNSGQDHVQNEENYAQVLDKFGSNFLSRDNPDLGTAFVKFSTLTKELSTLLKNLLQGLSHNVIFTLDSLLKGDLKGVKGDLKKPFDKAWKDYEMKFTKIEKEKREHAKQHGMIRTEITGAEIAEEMEKERRLFQLQMCEYLIKVNEIKTKKGVDLLQNLIKYYHAQCNFFQDGLKTADKLKQYIEKLAADLYNIKQTQDEEKKQLTALRDLIKSSLQLDPKEVGGLYVPSRANSDSQSRQGGYSMHQLQGNKEYGSEKKGFLLKKSDGIRKVWQRRKCAVKNGILTISHATSNRQPAKLNLLTCQVKPNAEDKKSFDLISHNRTYHFQAEDEQDYVAWISVLTNSKEEALTMAFRGEQSTGENSLEDLTKAIIEDVQRLPGNDICCDCGSSEPTWLSTNLGILTCIECSGIHREMGVHISRIQSLELDKLGTSELLLAKNVGNNSFNDIMEANLPSPSPKPTPSSDMTVRKEYITAKYVDHRFSRKTCASSSAKLNELLEAIKSRDLLALIQVYAEGVELMEPLLEPGQELGETALHLAVRTADQTSLHLVDFLVQNCGNLDKQTSVGNTVLHYCSMYGKPECLKLLLRSKPTVDIVNQNGETALDIAKRLKATQCEDLLSQAKSGKFNPHVHVEYEWNLRQDEMDESDDDLDDKPSPIKKERSPRPQSFCHSSSISPQDKLALPGFSTPRDKQRLSYGAFTNQIFVSTSTDLPTSPTSEAPPLPPRNAGKGPTGPPSTLPLGTQTSSGSSTLSKKRSPPPPPGHKRTLSDPPSPLPHGPPNKGAIPWGNDVGPSSSSKTANKFEGLSQQASTSSAKTALGPRVLPKLPQKVALRKTETSHHLSLDRANIPPETFQKSSQLSELPQKPPLGDLPPKPMELAPKPQIGELPPKPGELPPKPQLGDLPPKPQLSDLPPKPQMKDLPPKPQLGDLLAKSQASDLSAKVQPPSEVTQRSHTGDLSPNVQSRDAIQKQASEDSNDLTPTLPETPVPLPRKINTGKNKVRRVKTIYDCQADNDDELTFIEGEVIIVTGEEDQEWWIGHIEGQPERKGVFPVSFVHILSD</sequence>
<comment type="function">
    <text evidence="1 3">Possesses phosphatidylinositol 4,5-bisphosphate-dependent GTPase-activating protein activity for ARF1 (ADP ribosylation factor 1) and ARF5 and a lesser activity towards ARF6. May coordinate membrane trafficking with cell growth or actin cytoskeleton remodeling by binding to both SRC and PIP2. May function as a signal transduction protein involved in the differentiation of fibroblasts into adipocytes and possibly other cell types. Part of the ciliary targeting complex containing Rab11, ASAP1, Rabin8/RAB3IP, RAB11FIP3 and ARF4, which direct preciliary vesicle trafficking to mother centriole and ciliogenesis initiation (By similarity).</text>
</comment>
<comment type="activity regulation">
    <text evidence="1">Activity stimulated by phosphatidylinositol 4,5-bisphosphate (PIP2).</text>
</comment>
<comment type="subunit">
    <text evidence="1 3">Homodimer. Interacts with SRC and CRK. Interacts with RAB11FIP3. Interacts with PTK2B/PYK2. Interacts with CTTN. Interacts (via SH3 domain) with APC (By similarity). Interacts with REPS2; the interaction is direct (By similarity). Forms a complex containing RAB11A, ASAP1, RAB3IP, RAP11FIP3 and ARF4; the complex promotes preciliary trafficking; the complex binds to RHO in photoreceptor cells and promotes RHO ciliary transport (By similarity).</text>
</comment>
<comment type="subcellular location">
    <subcellularLocation>
        <location>Cytoplasm</location>
    </subcellularLocation>
    <subcellularLocation>
        <location>Membrane</location>
    </subcellularLocation>
    <subcellularLocation>
        <location evidence="3">Golgi apparatus</location>
    </subcellularLocation>
    <subcellularLocation>
        <location evidence="3">Golgi apparatus</location>
        <location evidence="3">trans-Golgi network</location>
    </subcellularLocation>
    <text evidence="1">Predominantly cytoplasmic. Partially membrane-associated (By similarity).</text>
</comment>
<comment type="alternative products">
    <event type="alternative splicing"/>
    <isoform>
        <id>Q1AAU6-1</id>
        <name>1</name>
        <name>Variant a</name>
        <sequence type="displayed"/>
    </isoform>
    <isoform>
        <id>Q1AAU6-2</id>
        <name>2</name>
        <name>Variant b</name>
        <sequence type="described" ref="VSP_021851"/>
    </isoform>
    <isoform>
        <id>Q1AAU6-3</id>
        <name>3</name>
        <name>Variant c</name>
        <sequence type="described" ref="VSP_021850 VSP_021851"/>
    </isoform>
</comment>
<comment type="domain">
    <text evidence="1">The PH domain most probably contributes to the phosphoinositide-dependent regulation of ADP ribosylation factors.</text>
</comment>
<comment type="PTM">
    <text evidence="1">Phosphorylated on tyrosine residues by SRC.</text>
</comment>
<organism>
    <name type="scientific">Rattus norvegicus</name>
    <name type="common">Rat</name>
    <dbReference type="NCBI Taxonomy" id="10116"/>
    <lineage>
        <taxon>Eukaryota</taxon>
        <taxon>Metazoa</taxon>
        <taxon>Chordata</taxon>
        <taxon>Craniata</taxon>
        <taxon>Vertebrata</taxon>
        <taxon>Euteleostomi</taxon>
        <taxon>Mammalia</taxon>
        <taxon>Eutheria</taxon>
        <taxon>Euarchontoglires</taxon>
        <taxon>Glires</taxon>
        <taxon>Rodentia</taxon>
        <taxon>Myomorpha</taxon>
        <taxon>Muroidea</taxon>
        <taxon>Muridae</taxon>
        <taxon>Murinae</taxon>
        <taxon>Rattus</taxon>
    </lineage>
</organism>
<accession>Q1AAU6</accession>
<accession>Q1AAU4</accession>
<accession>Q1AAU5</accession>